<name>NDHJ_PLAOC</name>
<proteinExistence type="inferred from homology"/>
<keyword id="KW-0150">Chloroplast</keyword>
<keyword id="KW-0472">Membrane</keyword>
<keyword id="KW-0520">NAD</keyword>
<keyword id="KW-0521">NADP</keyword>
<keyword id="KW-0934">Plastid</keyword>
<keyword id="KW-0618">Plastoquinone</keyword>
<keyword id="KW-0874">Quinone</keyword>
<keyword id="KW-0793">Thylakoid</keyword>
<keyword id="KW-1278">Translocase</keyword>
<keyword id="KW-0813">Transport</keyword>
<feature type="chain" id="PRO_0000358299" description="NAD(P)H-quinone oxidoreductase subunit J, chloroplastic">
    <location>
        <begin position="1"/>
        <end position="158"/>
    </location>
</feature>
<organism>
    <name type="scientific">Platanus occidentalis</name>
    <name type="common">Sycamore</name>
    <name type="synonym">American plane tree</name>
    <dbReference type="NCBI Taxonomy" id="4403"/>
    <lineage>
        <taxon>Eukaryota</taxon>
        <taxon>Viridiplantae</taxon>
        <taxon>Streptophyta</taxon>
        <taxon>Embryophyta</taxon>
        <taxon>Tracheophyta</taxon>
        <taxon>Spermatophyta</taxon>
        <taxon>Magnoliopsida</taxon>
        <taxon>Proteales</taxon>
        <taxon>Platanaceae</taxon>
        <taxon>Platanus</taxon>
    </lineage>
</organism>
<geneLocation type="chloroplast"/>
<evidence type="ECO:0000255" key="1">
    <source>
        <dbReference type="HAMAP-Rule" id="MF_01357"/>
    </source>
</evidence>
<comment type="function">
    <text evidence="1">NDH shuttles electrons from NAD(P)H:plastoquinone, via FMN and iron-sulfur (Fe-S) centers, to quinones in the photosynthetic chain and possibly in a chloroplast respiratory chain. The immediate electron acceptor for the enzyme in this species is believed to be plastoquinone. Couples the redox reaction to proton translocation, and thus conserves the redox energy in a proton gradient.</text>
</comment>
<comment type="catalytic activity">
    <reaction evidence="1">
        <text>a plastoquinone + NADH + (n+1) H(+)(in) = a plastoquinol + NAD(+) + n H(+)(out)</text>
        <dbReference type="Rhea" id="RHEA:42608"/>
        <dbReference type="Rhea" id="RHEA-COMP:9561"/>
        <dbReference type="Rhea" id="RHEA-COMP:9562"/>
        <dbReference type="ChEBI" id="CHEBI:15378"/>
        <dbReference type="ChEBI" id="CHEBI:17757"/>
        <dbReference type="ChEBI" id="CHEBI:57540"/>
        <dbReference type="ChEBI" id="CHEBI:57945"/>
        <dbReference type="ChEBI" id="CHEBI:62192"/>
    </reaction>
</comment>
<comment type="catalytic activity">
    <reaction evidence="1">
        <text>a plastoquinone + NADPH + (n+1) H(+)(in) = a plastoquinol + NADP(+) + n H(+)(out)</text>
        <dbReference type="Rhea" id="RHEA:42612"/>
        <dbReference type="Rhea" id="RHEA-COMP:9561"/>
        <dbReference type="Rhea" id="RHEA-COMP:9562"/>
        <dbReference type="ChEBI" id="CHEBI:15378"/>
        <dbReference type="ChEBI" id="CHEBI:17757"/>
        <dbReference type="ChEBI" id="CHEBI:57783"/>
        <dbReference type="ChEBI" id="CHEBI:58349"/>
        <dbReference type="ChEBI" id="CHEBI:62192"/>
    </reaction>
</comment>
<comment type="subunit">
    <text evidence="1">NDH is composed of at least 16 different subunits, 5 of which are encoded in the nucleus.</text>
</comment>
<comment type="subcellular location">
    <subcellularLocation>
        <location evidence="1">Plastid</location>
        <location evidence="1">Chloroplast thylakoid membrane</location>
        <topology evidence="1">Peripheral membrane protein</topology>
        <orientation evidence="1">Stromal side</orientation>
    </subcellularLocation>
</comment>
<comment type="similarity">
    <text evidence="1">Belongs to the complex I 30 kDa subunit family.</text>
</comment>
<sequence length="158" mass="18528">MQGRLSAWLVKHGLVHRSLGFDYQGIETLQIKSEDWHSIAVISYVYGYNYLRSQCAYDVAPGGLLASVYHLTRIQYGVDQPEEVCIKVFAARRNPRIPSVFWIWKSADFQERESYDMLGISYDNHPRLKRILMPESWIGWPLRKDYIAPNFYEIQDAH</sequence>
<dbReference type="EC" id="7.1.1.-" evidence="1"/>
<dbReference type="EMBL" id="DQ923116">
    <property type="protein sequence ID" value="ABI49781.1"/>
    <property type="molecule type" value="Genomic_DNA"/>
</dbReference>
<dbReference type="RefSeq" id="YP_740568.1">
    <property type="nucleotide sequence ID" value="NC_008335.1"/>
</dbReference>
<dbReference type="SMR" id="Q09G43"/>
<dbReference type="GeneID" id="4271339"/>
<dbReference type="GO" id="GO:0009535">
    <property type="term" value="C:chloroplast thylakoid membrane"/>
    <property type="evidence" value="ECO:0007669"/>
    <property type="project" value="UniProtKB-SubCell"/>
</dbReference>
<dbReference type="GO" id="GO:0008137">
    <property type="term" value="F:NADH dehydrogenase (ubiquinone) activity"/>
    <property type="evidence" value="ECO:0007669"/>
    <property type="project" value="InterPro"/>
</dbReference>
<dbReference type="GO" id="GO:0048038">
    <property type="term" value="F:quinone binding"/>
    <property type="evidence" value="ECO:0007669"/>
    <property type="project" value="UniProtKB-KW"/>
</dbReference>
<dbReference type="GO" id="GO:0019684">
    <property type="term" value="P:photosynthesis, light reaction"/>
    <property type="evidence" value="ECO:0007669"/>
    <property type="project" value="UniProtKB-UniRule"/>
</dbReference>
<dbReference type="FunFam" id="3.30.460.80:FF:000004">
    <property type="entry name" value="NAD(P)H-quinone oxidoreductase subunit J, chloroplastic"/>
    <property type="match status" value="1"/>
</dbReference>
<dbReference type="Gene3D" id="3.30.460.80">
    <property type="entry name" value="NADH:ubiquinone oxidoreductase, 30kDa subunit"/>
    <property type="match status" value="1"/>
</dbReference>
<dbReference type="HAMAP" id="MF_01357">
    <property type="entry name" value="NDH1_NuoC"/>
    <property type="match status" value="1"/>
</dbReference>
<dbReference type="InterPro" id="IPR010218">
    <property type="entry name" value="NADH_DH_suC"/>
</dbReference>
<dbReference type="InterPro" id="IPR037232">
    <property type="entry name" value="NADH_quin_OxRdtase_su_C/D-like"/>
</dbReference>
<dbReference type="InterPro" id="IPR001268">
    <property type="entry name" value="NADH_UbQ_OxRdtase_30kDa_su"/>
</dbReference>
<dbReference type="InterPro" id="IPR020396">
    <property type="entry name" value="NADH_UbQ_OxRdtase_CS"/>
</dbReference>
<dbReference type="NCBIfam" id="NF009141">
    <property type="entry name" value="PRK12494.1"/>
    <property type="match status" value="1"/>
</dbReference>
<dbReference type="PANTHER" id="PTHR10884:SF14">
    <property type="entry name" value="NADH DEHYDROGENASE [UBIQUINONE] IRON-SULFUR PROTEIN 3, MITOCHONDRIAL"/>
    <property type="match status" value="1"/>
</dbReference>
<dbReference type="PANTHER" id="PTHR10884">
    <property type="entry name" value="NADH DEHYDROGENASE UBIQUINONE IRON-SULFUR PROTEIN 3"/>
    <property type="match status" value="1"/>
</dbReference>
<dbReference type="Pfam" id="PF00329">
    <property type="entry name" value="Complex1_30kDa"/>
    <property type="match status" value="1"/>
</dbReference>
<dbReference type="SUPFAM" id="SSF143243">
    <property type="entry name" value="Nqo5-like"/>
    <property type="match status" value="1"/>
</dbReference>
<dbReference type="PROSITE" id="PS00542">
    <property type="entry name" value="COMPLEX1_30K"/>
    <property type="match status" value="1"/>
</dbReference>
<accession>Q09G43</accession>
<gene>
    <name evidence="1" type="primary">ndhJ</name>
</gene>
<protein>
    <recommendedName>
        <fullName evidence="1">NAD(P)H-quinone oxidoreductase subunit J, chloroplastic</fullName>
        <ecNumber evidence="1">7.1.1.-</ecNumber>
    </recommendedName>
    <alternativeName>
        <fullName>NAD(P)H dehydrogenase subunit J</fullName>
    </alternativeName>
    <alternativeName>
        <fullName evidence="1">NADH-plastoquinone oxidoreductase subunit J</fullName>
    </alternativeName>
</protein>
<reference key="1">
    <citation type="journal article" date="2006" name="BMC Plant Biol.">
        <title>Rapid and accurate pyrosequencing of angiosperm plastid genomes.</title>
        <authorList>
            <person name="Moore M.J."/>
            <person name="Dhingra A."/>
            <person name="Soltis P.S."/>
            <person name="Shaw R."/>
            <person name="Farmerie W.G."/>
            <person name="Folta K.M."/>
            <person name="Soltis D.E."/>
        </authorList>
    </citation>
    <scope>NUCLEOTIDE SEQUENCE [LARGE SCALE GENOMIC DNA]</scope>
</reference>